<protein>
    <recommendedName>
        <fullName evidence="1">Small ribosomal subunit protein bS20</fullName>
    </recommendedName>
    <alternativeName>
        <fullName evidence="2">30S ribosomal protein S20</fullName>
    </alternativeName>
</protein>
<keyword id="KW-0687">Ribonucleoprotein</keyword>
<keyword id="KW-0689">Ribosomal protein</keyword>
<keyword id="KW-0694">RNA-binding</keyword>
<keyword id="KW-0699">rRNA-binding</keyword>
<organism>
    <name type="scientific">Caldicellulosiruptor saccharolyticus (strain ATCC 43494 / DSM 8903 / Tp8T 6331)</name>
    <dbReference type="NCBI Taxonomy" id="351627"/>
    <lineage>
        <taxon>Bacteria</taxon>
        <taxon>Bacillati</taxon>
        <taxon>Bacillota</taxon>
        <taxon>Bacillota incertae sedis</taxon>
        <taxon>Caldicellulosiruptorales</taxon>
        <taxon>Caldicellulosiruptoraceae</taxon>
        <taxon>Caldicellulosiruptor</taxon>
    </lineage>
</organism>
<name>RS20_CALS8</name>
<evidence type="ECO:0000255" key="1">
    <source>
        <dbReference type="HAMAP-Rule" id="MF_00500"/>
    </source>
</evidence>
<evidence type="ECO:0000305" key="2"/>
<dbReference type="EMBL" id="CP000679">
    <property type="protein sequence ID" value="ABP66640.1"/>
    <property type="molecule type" value="Genomic_DNA"/>
</dbReference>
<dbReference type="RefSeq" id="WP_011916586.1">
    <property type="nucleotide sequence ID" value="NC_009437.1"/>
</dbReference>
<dbReference type="SMR" id="A4XIA5"/>
<dbReference type="STRING" id="351627.Csac_1026"/>
<dbReference type="KEGG" id="csc:Csac_1026"/>
<dbReference type="eggNOG" id="COG0268">
    <property type="taxonomic scope" value="Bacteria"/>
</dbReference>
<dbReference type="HOGENOM" id="CLU_160655_3_0_9"/>
<dbReference type="OrthoDB" id="9808392at2"/>
<dbReference type="Proteomes" id="UP000000256">
    <property type="component" value="Chromosome"/>
</dbReference>
<dbReference type="GO" id="GO:0005829">
    <property type="term" value="C:cytosol"/>
    <property type="evidence" value="ECO:0007669"/>
    <property type="project" value="TreeGrafter"/>
</dbReference>
<dbReference type="GO" id="GO:0015935">
    <property type="term" value="C:small ribosomal subunit"/>
    <property type="evidence" value="ECO:0007669"/>
    <property type="project" value="TreeGrafter"/>
</dbReference>
<dbReference type="GO" id="GO:0070181">
    <property type="term" value="F:small ribosomal subunit rRNA binding"/>
    <property type="evidence" value="ECO:0007669"/>
    <property type="project" value="TreeGrafter"/>
</dbReference>
<dbReference type="GO" id="GO:0003735">
    <property type="term" value="F:structural constituent of ribosome"/>
    <property type="evidence" value="ECO:0007669"/>
    <property type="project" value="InterPro"/>
</dbReference>
<dbReference type="GO" id="GO:0006412">
    <property type="term" value="P:translation"/>
    <property type="evidence" value="ECO:0007669"/>
    <property type="project" value="UniProtKB-UniRule"/>
</dbReference>
<dbReference type="FunFam" id="1.20.58.110:FF:000001">
    <property type="entry name" value="30S ribosomal protein S20"/>
    <property type="match status" value="1"/>
</dbReference>
<dbReference type="Gene3D" id="1.20.58.110">
    <property type="entry name" value="Ribosomal protein S20"/>
    <property type="match status" value="1"/>
</dbReference>
<dbReference type="HAMAP" id="MF_00500">
    <property type="entry name" value="Ribosomal_bS20"/>
    <property type="match status" value="1"/>
</dbReference>
<dbReference type="InterPro" id="IPR002583">
    <property type="entry name" value="Ribosomal_bS20"/>
</dbReference>
<dbReference type="InterPro" id="IPR036510">
    <property type="entry name" value="Ribosomal_bS20_sf"/>
</dbReference>
<dbReference type="NCBIfam" id="TIGR00029">
    <property type="entry name" value="S20"/>
    <property type="match status" value="1"/>
</dbReference>
<dbReference type="PANTHER" id="PTHR33398">
    <property type="entry name" value="30S RIBOSOMAL PROTEIN S20"/>
    <property type="match status" value="1"/>
</dbReference>
<dbReference type="PANTHER" id="PTHR33398:SF1">
    <property type="entry name" value="SMALL RIBOSOMAL SUBUNIT PROTEIN BS20C"/>
    <property type="match status" value="1"/>
</dbReference>
<dbReference type="Pfam" id="PF01649">
    <property type="entry name" value="Ribosomal_S20p"/>
    <property type="match status" value="1"/>
</dbReference>
<dbReference type="SUPFAM" id="SSF46992">
    <property type="entry name" value="Ribosomal protein S20"/>
    <property type="match status" value="1"/>
</dbReference>
<proteinExistence type="inferred from homology"/>
<sequence>MANTKSAKKKIKVIRRRTIENKIQKFKMKKAIKEVKKALLAGDIEKAKELYSKAAKLIDQTAAKGVIHKNNASRKKSRLMKLINKYAALSTPQPEKKAQ</sequence>
<comment type="function">
    <text evidence="1">Binds directly to 16S ribosomal RNA.</text>
</comment>
<comment type="similarity">
    <text evidence="1">Belongs to the bacterial ribosomal protein bS20 family.</text>
</comment>
<accession>A4XIA5</accession>
<gene>
    <name evidence="1" type="primary">rpsT</name>
    <name type="ordered locus">Csac_1026</name>
</gene>
<feature type="chain" id="PRO_1000014563" description="Small ribosomal subunit protein bS20">
    <location>
        <begin position="1"/>
        <end position="99"/>
    </location>
</feature>
<reference key="1">
    <citation type="submission" date="2007-04" db="EMBL/GenBank/DDBJ databases">
        <title>Genome sequence of the thermophilic hydrogen-producing bacterium Caldicellulosiruptor saccharolyticus DSM 8903.</title>
        <authorList>
            <person name="Copeland A."/>
            <person name="Lucas S."/>
            <person name="Lapidus A."/>
            <person name="Barry K."/>
            <person name="Detter J.C."/>
            <person name="Glavina del Rio T."/>
            <person name="Hammon N."/>
            <person name="Israni S."/>
            <person name="Dalin E."/>
            <person name="Tice H."/>
            <person name="Pitluck S."/>
            <person name="Kiss H."/>
            <person name="Brettin T."/>
            <person name="Bruce D."/>
            <person name="Han C."/>
            <person name="Schmutz J."/>
            <person name="Larimer F."/>
            <person name="Land M."/>
            <person name="Hauser L."/>
            <person name="Kyrpides N."/>
            <person name="Lykidis A."/>
            <person name="van de Werken H.J.G."/>
            <person name="Verhaart M.R.A."/>
            <person name="VanFossen A.L."/>
            <person name="Lewis D.L."/>
            <person name="Nichols J.D."/>
            <person name="Goorissen H.P."/>
            <person name="van Niel E.W.J."/>
            <person name="Stams F.J.M."/>
            <person name="Willquist K.U."/>
            <person name="Ward D.E."/>
            <person name="van der Oost J."/>
            <person name="Kelly R.M."/>
            <person name="Kengen S.M.W."/>
            <person name="Richardson P."/>
        </authorList>
    </citation>
    <scope>NUCLEOTIDE SEQUENCE [LARGE SCALE GENOMIC DNA]</scope>
    <source>
        <strain>ATCC 43494 / DSM 8903 / Tp8T 6331</strain>
    </source>
</reference>